<gene>
    <name evidence="1" type="primary">tgt</name>
    <name type="ordered locus">STER_1785</name>
</gene>
<name>TGT_STRTD</name>
<evidence type="ECO:0000255" key="1">
    <source>
        <dbReference type="HAMAP-Rule" id="MF_00168"/>
    </source>
</evidence>
<organism>
    <name type="scientific">Streptococcus thermophilus (strain ATCC BAA-491 / LMD-9)</name>
    <dbReference type="NCBI Taxonomy" id="322159"/>
    <lineage>
        <taxon>Bacteria</taxon>
        <taxon>Bacillati</taxon>
        <taxon>Bacillota</taxon>
        <taxon>Bacilli</taxon>
        <taxon>Lactobacillales</taxon>
        <taxon>Streptococcaceae</taxon>
        <taxon>Streptococcus</taxon>
    </lineage>
</organism>
<proteinExistence type="inferred from homology"/>
<keyword id="KW-0328">Glycosyltransferase</keyword>
<keyword id="KW-0479">Metal-binding</keyword>
<keyword id="KW-0671">Queuosine biosynthesis</keyword>
<keyword id="KW-0808">Transferase</keyword>
<keyword id="KW-0819">tRNA processing</keyword>
<keyword id="KW-0862">Zinc</keyword>
<sequence>MIDFPIKYRLIKKEKYTGARLGEIITPHGTFPTPMFMPVGTQATVKTQSPEELKQMGSGIILANTYHLWLRPGDELIAKAGGLHKFMNWDQAILTDSGGFQVYSLAEKRDISEEGVTFKNHLNGSKMFLSPEKAISVQNNLGSDIMMSFDECPQFYQPYDYVKKSIERTSRWAERGLKAHRRPHDQGLFGIVQGAGFEDLRRQSSHDLVSMDFPGYSIGGLAVGETHEEMNAVLDFTVPLLPENKPRYLMGVGAPDSLIDGVIRGVDMYDCVLPTRIARNGTCMTSNGRLVVKNAAYAEDFSPIDPECDCYTCKNYTRAYVRHLLKADETFGIRLTSYHNLYFLVNLMAKVRQAIVDDNLLEFRQDFIEKYGYNASNRNF</sequence>
<protein>
    <recommendedName>
        <fullName evidence="1">Queuine tRNA-ribosyltransferase</fullName>
        <ecNumber evidence="1">2.4.2.29</ecNumber>
    </recommendedName>
    <alternativeName>
        <fullName evidence="1">Guanine insertion enzyme</fullName>
    </alternativeName>
    <alternativeName>
        <fullName evidence="1">tRNA-guanine transglycosylase</fullName>
    </alternativeName>
</protein>
<feature type="chain" id="PRO_1000016877" description="Queuine tRNA-ribosyltransferase">
    <location>
        <begin position="1"/>
        <end position="380"/>
    </location>
</feature>
<feature type="region of interest" description="RNA binding" evidence="1">
    <location>
        <begin position="251"/>
        <end position="257"/>
    </location>
</feature>
<feature type="region of interest" description="RNA binding; important for wobble base 34 recognition" evidence="1">
    <location>
        <begin position="275"/>
        <end position="279"/>
    </location>
</feature>
<feature type="active site" description="Proton acceptor" evidence="1">
    <location>
        <position position="96"/>
    </location>
</feature>
<feature type="active site" description="Nucleophile" evidence="1">
    <location>
        <position position="270"/>
    </location>
</feature>
<feature type="binding site" evidence="1">
    <location>
        <begin position="96"/>
        <end position="100"/>
    </location>
    <ligand>
        <name>substrate</name>
    </ligand>
</feature>
<feature type="binding site" evidence="1">
    <location>
        <position position="150"/>
    </location>
    <ligand>
        <name>substrate</name>
    </ligand>
</feature>
<feature type="binding site" evidence="1">
    <location>
        <position position="193"/>
    </location>
    <ligand>
        <name>substrate</name>
    </ligand>
</feature>
<feature type="binding site" evidence="1">
    <location>
        <position position="220"/>
    </location>
    <ligand>
        <name>substrate</name>
    </ligand>
</feature>
<feature type="binding site" evidence="1">
    <location>
        <position position="308"/>
    </location>
    <ligand>
        <name>Zn(2+)</name>
        <dbReference type="ChEBI" id="CHEBI:29105"/>
    </ligand>
</feature>
<feature type="binding site" evidence="1">
    <location>
        <position position="310"/>
    </location>
    <ligand>
        <name>Zn(2+)</name>
        <dbReference type="ChEBI" id="CHEBI:29105"/>
    </ligand>
</feature>
<feature type="binding site" evidence="1">
    <location>
        <position position="313"/>
    </location>
    <ligand>
        <name>Zn(2+)</name>
        <dbReference type="ChEBI" id="CHEBI:29105"/>
    </ligand>
</feature>
<feature type="binding site" evidence="1">
    <location>
        <position position="339"/>
    </location>
    <ligand>
        <name>Zn(2+)</name>
        <dbReference type="ChEBI" id="CHEBI:29105"/>
    </ligand>
</feature>
<reference key="1">
    <citation type="journal article" date="2006" name="Proc. Natl. Acad. Sci. U.S.A.">
        <title>Comparative genomics of the lactic acid bacteria.</title>
        <authorList>
            <person name="Makarova K.S."/>
            <person name="Slesarev A."/>
            <person name="Wolf Y.I."/>
            <person name="Sorokin A."/>
            <person name="Mirkin B."/>
            <person name="Koonin E.V."/>
            <person name="Pavlov A."/>
            <person name="Pavlova N."/>
            <person name="Karamychev V."/>
            <person name="Polouchine N."/>
            <person name="Shakhova V."/>
            <person name="Grigoriev I."/>
            <person name="Lou Y."/>
            <person name="Rohksar D."/>
            <person name="Lucas S."/>
            <person name="Huang K."/>
            <person name="Goodstein D.M."/>
            <person name="Hawkins T."/>
            <person name="Plengvidhya V."/>
            <person name="Welker D."/>
            <person name="Hughes J."/>
            <person name="Goh Y."/>
            <person name="Benson A."/>
            <person name="Baldwin K."/>
            <person name="Lee J.-H."/>
            <person name="Diaz-Muniz I."/>
            <person name="Dosti B."/>
            <person name="Smeianov V."/>
            <person name="Wechter W."/>
            <person name="Barabote R."/>
            <person name="Lorca G."/>
            <person name="Altermann E."/>
            <person name="Barrangou R."/>
            <person name="Ganesan B."/>
            <person name="Xie Y."/>
            <person name="Rawsthorne H."/>
            <person name="Tamir D."/>
            <person name="Parker C."/>
            <person name="Breidt F."/>
            <person name="Broadbent J.R."/>
            <person name="Hutkins R."/>
            <person name="O'Sullivan D."/>
            <person name="Steele J."/>
            <person name="Unlu G."/>
            <person name="Saier M.H. Jr."/>
            <person name="Klaenhammer T."/>
            <person name="Richardson P."/>
            <person name="Kozyavkin S."/>
            <person name="Weimer B.C."/>
            <person name="Mills D.A."/>
        </authorList>
    </citation>
    <scope>NUCLEOTIDE SEQUENCE [LARGE SCALE GENOMIC DNA]</scope>
    <source>
        <strain>ATCC BAA-491 / LMD-9</strain>
    </source>
</reference>
<comment type="function">
    <text evidence="1">Catalyzes the base-exchange of a guanine (G) residue with the queuine precursor 7-aminomethyl-7-deazaguanine (PreQ1) at position 34 (anticodon wobble position) in tRNAs with GU(N) anticodons (tRNA-Asp, -Asn, -His and -Tyr). Catalysis occurs through a double-displacement mechanism. The nucleophile active site attacks the C1' of nucleotide 34 to detach the guanine base from the RNA, forming a covalent enzyme-RNA intermediate. The proton acceptor active site deprotonates the incoming PreQ1, allowing a nucleophilic attack on the C1' of the ribose to form the product. After dissociation, two additional enzymatic reactions on the tRNA convert PreQ1 to queuine (Q), resulting in the hypermodified nucleoside queuosine (7-(((4,5-cis-dihydroxy-2-cyclopenten-1-yl)amino)methyl)-7-deazaguanosine).</text>
</comment>
<comment type="catalytic activity">
    <reaction evidence="1">
        <text>7-aminomethyl-7-carbaguanine + guanosine(34) in tRNA = 7-aminomethyl-7-carbaguanosine(34) in tRNA + guanine</text>
        <dbReference type="Rhea" id="RHEA:24104"/>
        <dbReference type="Rhea" id="RHEA-COMP:10341"/>
        <dbReference type="Rhea" id="RHEA-COMP:10342"/>
        <dbReference type="ChEBI" id="CHEBI:16235"/>
        <dbReference type="ChEBI" id="CHEBI:58703"/>
        <dbReference type="ChEBI" id="CHEBI:74269"/>
        <dbReference type="ChEBI" id="CHEBI:82833"/>
        <dbReference type="EC" id="2.4.2.29"/>
    </reaction>
</comment>
<comment type="cofactor">
    <cofactor evidence="1">
        <name>Zn(2+)</name>
        <dbReference type="ChEBI" id="CHEBI:29105"/>
    </cofactor>
    <text evidence="1">Binds 1 zinc ion per subunit.</text>
</comment>
<comment type="pathway">
    <text evidence="1">tRNA modification; tRNA-queuosine biosynthesis.</text>
</comment>
<comment type="subunit">
    <text evidence="1">Homodimer. Within each dimer, one monomer is responsible for RNA recognition and catalysis, while the other monomer binds to the replacement base PreQ1.</text>
</comment>
<comment type="similarity">
    <text evidence="1">Belongs to the queuine tRNA-ribosyltransferase family.</text>
</comment>
<dbReference type="EC" id="2.4.2.29" evidence="1"/>
<dbReference type="EMBL" id="CP000419">
    <property type="protein sequence ID" value="ABJ66917.1"/>
    <property type="molecule type" value="Genomic_DNA"/>
</dbReference>
<dbReference type="RefSeq" id="WP_011681659.1">
    <property type="nucleotide sequence ID" value="NC_008532.1"/>
</dbReference>
<dbReference type="SMR" id="Q03IQ5"/>
<dbReference type="KEGG" id="ste:STER_1785"/>
<dbReference type="HOGENOM" id="CLU_022060_0_1_9"/>
<dbReference type="UniPathway" id="UPA00392"/>
<dbReference type="GO" id="GO:0005829">
    <property type="term" value="C:cytosol"/>
    <property type="evidence" value="ECO:0007669"/>
    <property type="project" value="TreeGrafter"/>
</dbReference>
<dbReference type="GO" id="GO:0046872">
    <property type="term" value="F:metal ion binding"/>
    <property type="evidence" value="ECO:0007669"/>
    <property type="project" value="UniProtKB-KW"/>
</dbReference>
<dbReference type="GO" id="GO:0008479">
    <property type="term" value="F:tRNA-guanosine(34) queuine transglycosylase activity"/>
    <property type="evidence" value="ECO:0007669"/>
    <property type="project" value="UniProtKB-UniRule"/>
</dbReference>
<dbReference type="GO" id="GO:0008616">
    <property type="term" value="P:queuosine biosynthetic process"/>
    <property type="evidence" value="ECO:0007669"/>
    <property type="project" value="UniProtKB-UniRule"/>
</dbReference>
<dbReference type="GO" id="GO:0002099">
    <property type="term" value="P:tRNA wobble guanine modification"/>
    <property type="evidence" value="ECO:0007669"/>
    <property type="project" value="TreeGrafter"/>
</dbReference>
<dbReference type="GO" id="GO:0101030">
    <property type="term" value="P:tRNA-guanine transglycosylation"/>
    <property type="evidence" value="ECO:0007669"/>
    <property type="project" value="InterPro"/>
</dbReference>
<dbReference type="FunFam" id="3.20.20.105:FF:000001">
    <property type="entry name" value="Queuine tRNA-ribosyltransferase"/>
    <property type="match status" value="1"/>
</dbReference>
<dbReference type="Gene3D" id="3.20.20.105">
    <property type="entry name" value="Queuine tRNA-ribosyltransferase-like"/>
    <property type="match status" value="1"/>
</dbReference>
<dbReference type="HAMAP" id="MF_00168">
    <property type="entry name" value="Q_tRNA_Tgt"/>
    <property type="match status" value="1"/>
</dbReference>
<dbReference type="InterPro" id="IPR050076">
    <property type="entry name" value="ArchSynthase1/Queuine_TRR"/>
</dbReference>
<dbReference type="InterPro" id="IPR004803">
    <property type="entry name" value="TGT"/>
</dbReference>
<dbReference type="InterPro" id="IPR036511">
    <property type="entry name" value="TGT-like_sf"/>
</dbReference>
<dbReference type="InterPro" id="IPR002616">
    <property type="entry name" value="tRNA_ribo_trans-like"/>
</dbReference>
<dbReference type="NCBIfam" id="TIGR00430">
    <property type="entry name" value="Q_tRNA_tgt"/>
    <property type="match status" value="1"/>
</dbReference>
<dbReference type="NCBIfam" id="TIGR00449">
    <property type="entry name" value="tgt_general"/>
    <property type="match status" value="1"/>
</dbReference>
<dbReference type="PANTHER" id="PTHR46499">
    <property type="entry name" value="QUEUINE TRNA-RIBOSYLTRANSFERASE"/>
    <property type="match status" value="1"/>
</dbReference>
<dbReference type="PANTHER" id="PTHR46499:SF1">
    <property type="entry name" value="QUEUINE TRNA-RIBOSYLTRANSFERASE"/>
    <property type="match status" value="1"/>
</dbReference>
<dbReference type="Pfam" id="PF01702">
    <property type="entry name" value="TGT"/>
    <property type="match status" value="1"/>
</dbReference>
<dbReference type="SUPFAM" id="SSF51713">
    <property type="entry name" value="tRNA-guanine transglycosylase"/>
    <property type="match status" value="1"/>
</dbReference>
<accession>Q03IQ5</accession>